<gene>
    <name type="primary">WNK3</name>
    <name type="ordered locus">At3g48260</name>
    <name type="ORF">T29H11_220</name>
</gene>
<protein>
    <recommendedName>
        <fullName>Probable serine/threonine-protein kinase WNK3</fullName>
        <shortName>AtWNK3</shortName>
        <ecNumber>2.7.11.1</ecNumber>
    </recommendedName>
    <alternativeName>
        <fullName>Protein kinase with no lysine 3</fullName>
    </alternativeName>
</protein>
<accession>Q9STK6</accession>
<dbReference type="EC" id="2.7.11.1"/>
<dbReference type="EMBL" id="AB085616">
    <property type="protein sequence ID" value="BAB92985.1"/>
    <property type="molecule type" value="mRNA"/>
</dbReference>
<dbReference type="EMBL" id="AL049659">
    <property type="protein sequence ID" value="CAB41172.1"/>
    <property type="molecule type" value="Genomic_DNA"/>
</dbReference>
<dbReference type="EMBL" id="CP002686">
    <property type="protein sequence ID" value="AEE78392.1"/>
    <property type="molecule type" value="Genomic_DNA"/>
</dbReference>
<dbReference type="PIR" id="T06716">
    <property type="entry name" value="T06716"/>
</dbReference>
<dbReference type="RefSeq" id="NP_680105.1">
    <property type="nucleotide sequence ID" value="NM_148852.2"/>
</dbReference>
<dbReference type="SMR" id="Q9STK6"/>
<dbReference type="BioGRID" id="9303">
    <property type="interactions" value="28"/>
</dbReference>
<dbReference type="FunCoup" id="Q9STK6">
    <property type="interactions" value="1210"/>
</dbReference>
<dbReference type="IntAct" id="Q9STK6">
    <property type="interactions" value="28"/>
</dbReference>
<dbReference type="STRING" id="3702.Q9STK6"/>
<dbReference type="iPTMnet" id="Q9STK6"/>
<dbReference type="PaxDb" id="3702-AT3G48260.1"/>
<dbReference type="ProteomicsDB" id="242786"/>
<dbReference type="EnsemblPlants" id="AT3G48260.1">
    <property type="protein sequence ID" value="AT3G48260.1"/>
    <property type="gene ID" value="AT3G48260"/>
</dbReference>
<dbReference type="GeneID" id="823984"/>
<dbReference type="Gramene" id="AT3G48260.1">
    <property type="protein sequence ID" value="AT3G48260.1"/>
    <property type="gene ID" value="AT3G48260"/>
</dbReference>
<dbReference type="KEGG" id="ath:AT3G48260"/>
<dbReference type="Araport" id="AT3G48260"/>
<dbReference type="TAIR" id="AT3G48260">
    <property type="gene designation" value="WNK3"/>
</dbReference>
<dbReference type="eggNOG" id="KOG0584">
    <property type="taxonomic scope" value="Eukaryota"/>
</dbReference>
<dbReference type="HOGENOM" id="CLU_000288_142_3_1"/>
<dbReference type="InParanoid" id="Q9STK6"/>
<dbReference type="OMA" id="KCIAHVS"/>
<dbReference type="PhylomeDB" id="Q9STK6"/>
<dbReference type="PRO" id="PR:Q9STK6"/>
<dbReference type="Proteomes" id="UP000006548">
    <property type="component" value="Chromosome 3"/>
</dbReference>
<dbReference type="ExpressionAtlas" id="Q9STK6">
    <property type="expression patterns" value="baseline and differential"/>
</dbReference>
<dbReference type="GO" id="GO:0005524">
    <property type="term" value="F:ATP binding"/>
    <property type="evidence" value="ECO:0007669"/>
    <property type="project" value="UniProtKB-KW"/>
</dbReference>
<dbReference type="GO" id="GO:0004672">
    <property type="term" value="F:protein kinase activity"/>
    <property type="evidence" value="ECO:0000304"/>
    <property type="project" value="TAIR"/>
</dbReference>
<dbReference type="GO" id="GO:0106310">
    <property type="term" value="F:protein serine kinase activity"/>
    <property type="evidence" value="ECO:0007669"/>
    <property type="project" value="RHEA"/>
</dbReference>
<dbReference type="GO" id="GO:0004674">
    <property type="term" value="F:protein serine/threonine kinase activity"/>
    <property type="evidence" value="ECO:0007669"/>
    <property type="project" value="UniProtKB-KW"/>
</dbReference>
<dbReference type="GO" id="GO:0006468">
    <property type="term" value="P:protein phosphorylation"/>
    <property type="evidence" value="ECO:0000304"/>
    <property type="project" value="TAIR"/>
</dbReference>
<dbReference type="CDD" id="cd13983">
    <property type="entry name" value="STKc_WNK"/>
    <property type="match status" value="1"/>
</dbReference>
<dbReference type="FunFam" id="3.30.200.20:FF:000075">
    <property type="entry name" value="Probable serine/threonine-protein kinase WNK1"/>
    <property type="match status" value="1"/>
</dbReference>
<dbReference type="FunFam" id="1.10.510.10:FF:000046">
    <property type="entry name" value="probable serine/threonine-protein kinase WNK9"/>
    <property type="match status" value="1"/>
</dbReference>
<dbReference type="Gene3D" id="3.10.20.90">
    <property type="entry name" value="Phosphatidylinositol 3-kinase Catalytic Subunit, Chain A, domain 1"/>
    <property type="match status" value="1"/>
</dbReference>
<dbReference type="Gene3D" id="3.30.200.20">
    <property type="entry name" value="Phosphorylase Kinase, domain 1"/>
    <property type="match status" value="1"/>
</dbReference>
<dbReference type="Gene3D" id="1.10.510.10">
    <property type="entry name" value="Transferase(Phosphotransferase) domain 1"/>
    <property type="match status" value="1"/>
</dbReference>
<dbReference type="InterPro" id="IPR011009">
    <property type="entry name" value="Kinase-like_dom_sf"/>
</dbReference>
<dbReference type="InterPro" id="IPR024678">
    <property type="entry name" value="Kinase_OSR1/WNK_CCT"/>
</dbReference>
<dbReference type="InterPro" id="IPR000719">
    <property type="entry name" value="Prot_kinase_dom"/>
</dbReference>
<dbReference type="InterPro" id="IPR008271">
    <property type="entry name" value="Ser/Thr_kinase_AS"/>
</dbReference>
<dbReference type="InterPro" id="IPR050588">
    <property type="entry name" value="WNK_Ser-Thr_kinase"/>
</dbReference>
<dbReference type="PANTHER" id="PTHR13902">
    <property type="entry name" value="SERINE/THREONINE-PROTEIN KINASE WNK WITH NO LYSINE -RELATED"/>
    <property type="match status" value="1"/>
</dbReference>
<dbReference type="Pfam" id="PF12202">
    <property type="entry name" value="OSR1_C"/>
    <property type="match status" value="1"/>
</dbReference>
<dbReference type="Pfam" id="PF00069">
    <property type="entry name" value="Pkinase"/>
    <property type="match status" value="1"/>
</dbReference>
<dbReference type="SMART" id="SM00220">
    <property type="entry name" value="S_TKc"/>
    <property type="match status" value="1"/>
</dbReference>
<dbReference type="SUPFAM" id="SSF56112">
    <property type="entry name" value="Protein kinase-like (PK-like)"/>
    <property type="match status" value="1"/>
</dbReference>
<dbReference type="PROSITE" id="PS50011">
    <property type="entry name" value="PROTEIN_KINASE_DOM"/>
    <property type="match status" value="1"/>
</dbReference>
<dbReference type="PROSITE" id="PS00108">
    <property type="entry name" value="PROTEIN_KINASE_ST"/>
    <property type="match status" value="1"/>
</dbReference>
<keyword id="KW-0067">ATP-binding</keyword>
<keyword id="KW-0175">Coiled coil</keyword>
<keyword id="KW-0418">Kinase</keyword>
<keyword id="KW-0547">Nucleotide-binding</keyword>
<keyword id="KW-1185">Reference proteome</keyword>
<keyword id="KW-0723">Serine/threonine-protein kinase</keyword>
<keyword id="KW-0808">Transferase</keyword>
<reference key="1">
    <citation type="journal article" date="2002" name="Biosci. Biotechnol. Biochem.">
        <title>Compilation and characterization of a novel WNK family of protein kinases in Arabiodpsis thaliana with reference to circadian rhythms.</title>
        <authorList>
            <person name="Nakamichi N."/>
            <person name="Murakami-Kojima M."/>
            <person name="Sato E."/>
            <person name="Kishi Y."/>
            <person name="Yamashino T."/>
            <person name="Mizuno T."/>
        </authorList>
    </citation>
    <scope>NUCLEOTIDE SEQUENCE [MRNA]</scope>
    <source>
        <strain>cv. Columbia</strain>
    </source>
</reference>
<reference key="2">
    <citation type="journal article" date="2000" name="Nature">
        <title>Sequence and analysis of chromosome 3 of the plant Arabidopsis thaliana.</title>
        <authorList>
            <person name="Salanoubat M."/>
            <person name="Lemcke K."/>
            <person name="Rieger M."/>
            <person name="Ansorge W."/>
            <person name="Unseld M."/>
            <person name="Fartmann B."/>
            <person name="Valle G."/>
            <person name="Bloecker H."/>
            <person name="Perez-Alonso M."/>
            <person name="Obermaier B."/>
            <person name="Delseny M."/>
            <person name="Boutry M."/>
            <person name="Grivell L.A."/>
            <person name="Mache R."/>
            <person name="Puigdomenech P."/>
            <person name="De Simone V."/>
            <person name="Choisne N."/>
            <person name="Artiguenave F."/>
            <person name="Robert C."/>
            <person name="Brottier P."/>
            <person name="Wincker P."/>
            <person name="Cattolico L."/>
            <person name="Weissenbach J."/>
            <person name="Saurin W."/>
            <person name="Quetier F."/>
            <person name="Schaefer M."/>
            <person name="Mueller-Auer S."/>
            <person name="Gabel C."/>
            <person name="Fuchs M."/>
            <person name="Benes V."/>
            <person name="Wurmbach E."/>
            <person name="Drzonek H."/>
            <person name="Erfle H."/>
            <person name="Jordan N."/>
            <person name="Bangert S."/>
            <person name="Wiedelmann R."/>
            <person name="Kranz H."/>
            <person name="Voss H."/>
            <person name="Holland R."/>
            <person name="Brandt P."/>
            <person name="Nyakatura G."/>
            <person name="Vezzi A."/>
            <person name="D'Angelo M."/>
            <person name="Pallavicini A."/>
            <person name="Toppo S."/>
            <person name="Simionati B."/>
            <person name="Conrad A."/>
            <person name="Hornischer K."/>
            <person name="Kauer G."/>
            <person name="Loehnert T.-H."/>
            <person name="Nordsiek G."/>
            <person name="Reichelt J."/>
            <person name="Scharfe M."/>
            <person name="Schoen O."/>
            <person name="Bargues M."/>
            <person name="Terol J."/>
            <person name="Climent J."/>
            <person name="Navarro P."/>
            <person name="Collado C."/>
            <person name="Perez-Perez A."/>
            <person name="Ottenwaelder B."/>
            <person name="Duchemin D."/>
            <person name="Cooke R."/>
            <person name="Laudie M."/>
            <person name="Berger-Llauro C."/>
            <person name="Purnelle B."/>
            <person name="Masuy D."/>
            <person name="de Haan M."/>
            <person name="Maarse A.C."/>
            <person name="Alcaraz J.-P."/>
            <person name="Cottet A."/>
            <person name="Casacuberta E."/>
            <person name="Monfort A."/>
            <person name="Argiriou A."/>
            <person name="Flores M."/>
            <person name="Liguori R."/>
            <person name="Vitale D."/>
            <person name="Mannhaupt G."/>
            <person name="Haase D."/>
            <person name="Schoof H."/>
            <person name="Rudd S."/>
            <person name="Zaccaria P."/>
            <person name="Mewes H.-W."/>
            <person name="Mayer K.F.X."/>
            <person name="Kaul S."/>
            <person name="Town C.D."/>
            <person name="Koo H.L."/>
            <person name="Tallon L.J."/>
            <person name="Jenkins J."/>
            <person name="Rooney T."/>
            <person name="Rizzo M."/>
            <person name="Walts A."/>
            <person name="Utterback T."/>
            <person name="Fujii C.Y."/>
            <person name="Shea T.P."/>
            <person name="Creasy T.H."/>
            <person name="Haas B."/>
            <person name="Maiti R."/>
            <person name="Wu D."/>
            <person name="Peterson J."/>
            <person name="Van Aken S."/>
            <person name="Pai G."/>
            <person name="Militscher J."/>
            <person name="Sellers P."/>
            <person name="Gill J.E."/>
            <person name="Feldblyum T.V."/>
            <person name="Preuss D."/>
            <person name="Lin X."/>
            <person name="Nierman W.C."/>
            <person name="Salzberg S.L."/>
            <person name="White O."/>
            <person name="Venter J.C."/>
            <person name="Fraser C.M."/>
            <person name="Kaneko T."/>
            <person name="Nakamura Y."/>
            <person name="Sato S."/>
            <person name="Kato T."/>
            <person name="Asamizu E."/>
            <person name="Sasamoto S."/>
            <person name="Kimura T."/>
            <person name="Idesawa K."/>
            <person name="Kawashima K."/>
            <person name="Kishida Y."/>
            <person name="Kiyokawa C."/>
            <person name="Kohara M."/>
            <person name="Matsumoto M."/>
            <person name="Matsuno A."/>
            <person name="Muraki A."/>
            <person name="Nakayama S."/>
            <person name="Nakazaki N."/>
            <person name="Shinpo S."/>
            <person name="Takeuchi C."/>
            <person name="Wada T."/>
            <person name="Watanabe A."/>
            <person name="Yamada M."/>
            <person name="Yasuda M."/>
            <person name="Tabata S."/>
        </authorList>
    </citation>
    <scope>NUCLEOTIDE SEQUENCE [LARGE SCALE GENOMIC DNA]</scope>
    <source>
        <strain>cv. Columbia</strain>
    </source>
</reference>
<reference key="3">
    <citation type="journal article" date="2017" name="Plant J.">
        <title>Araport11: a complete reannotation of the Arabidopsis thaliana reference genome.</title>
        <authorList>
            <person name="Cheng C.Y."/>
            <person name="Krishnakumar V."/>
            <person name="Chan A.P."/>
            <person name="Thibaud-Nissen F."/>
            <person name="Schobel S."/>
            <person name="Town C.D."/>
        </authorList>
    </citation>
    <scope>GENOME REANNOTATION</scope>
    <source>
        <strain>cv. Columbia</strain>
    </source>
</reference>
<organism>
    <name type="scientific">Arabidopsis thaliana</name>
    <name type="common">Mouse-ear cress</name>
    <dbReference type="NCBI Taxonomy" id="3702"/>
    <lineage>
        <taxon>Eukaryota</taxon>
        <taxon>Viridiplantae</taxon>
        <taxon>Streptophyta</taxon>
        <taxon>Embryophyta</taxon>
        <taxon>Tracheophyta</taxon>
        <taxon>Spermatophyta</taxon>
        <taxon>Magnoliopsida</taxon>
        <taxon>eudicotyledons</taxon>
        <taxon>Gunneridae</taxon>
        <taxon>Pentapetalae</taxon>
        <taxon>rosids</taxon>
        <taxon>malvids</taxon>
        <taxon>Brassicales</taxon>
        <taxon>Brassicaceae</taxon>
        <taxon>Camelineae</taxon>
        <taxon>Arabidopsis</taxon>
    </lineage>
</organism>
<feature type="chain" id="PRO_0000351661" description="Probable serine/threonine-protein kinase WNK3">
    <location>
        <begin position="1"/>
        <end position="516"/>
    </location>
</feature>
<feature type="domain" description="Protein kinase" evidence="5">
    <location>
        <begin position="22"/>
        <end position="280"/>
    </location>
</feature>
<feature type="region of interest" description="Disordered" evidence="6">
    <location>
        <begin position="426"/>
        <end position="451"/>
    </location>
</feature>
<feature type="coiled-coil region" evidence="4">
    <location>
        <begin position="457"/>
        <end position="490"/>
    </location>
</feature>
<feature type="compositionally biased region" description="Polar residues" evidence="6">
    <location>
        <begin position="442"/>
        <end position="451"/>
    </location>
</feature>
<feature type="active site" description="Proton acceptor" evidence="3">
    <location>
        <position position="169"/>
    </location>
</feature>
<feature type="binding site" evidence="2">
    <location>
        <begin position="102"/>
        <end position="105"/>
    </location>
    <ligand>
        <name>ATP</name>
        <dbReference type="ChEBI" id="CHEBI:30616"/>
    </ligand>
</feature>
<feature type="binding site" evidence="2">
    <location>
        <position position="152"/>
    </location>
    <ligand>
        <name>ATP</name>
        <dbReference type="ChEBI" id="CHEBI:30616"/>
    </ligand>
</feature>
<sequence>MRQDENNSEEEFVEIDPTGRYGRYKEVLGKGAFKEVYRAFDQLEGIEVAWNQVKLDDKFCSSEDLDRLYSEVHLLKTLKHKSIIKFYTSWIDHQHMTINLITEVFTSGNLRQYRKKHKCVDLRALKKWSRQILEGLVYLHSHDPPVIHRDLKCDNIFINGNQGEVKIGDLGLAAILHRARSAHSVIGTPEFMAPELYEEDYNVLVDIYAFGMCLLELVTFEYPYSECTNAAQIYRKVTSGIKPAALLNVTDPQVRAFIEKCIAKVSQRLSAKELLDDPFLKCYKENTENVSSHKENGYNGNGIVDKLSDSEVGLLTVEGQRKDLNTIFLKLRITDSKGQIRNIHFPFNIETDTSFSVAIEMVEELDLTDDQDISTIAKMIDTEIHSHIPDWTPSRLIGDDSAVQKCLSSPETLHLDRFPSGRKFWSSPKAGAGDSRSPFAPRSNSKLSSAQGPINQEVGVIVEKLESLLRKQREEIEEMQRDQERIVTEFLKEFPPEICEEALVRLQVKDSDNLLC</sequence>
<name>WNK3_ARATH</name>
<evidence type="ECO:0000250" key="1"/>
<evidence type="ECO:0000250" key="2">
    <source>
        <dbReference type="UniProtKB" id="Q9H4A3"/>
    </source>
</evidence>
<evidence type="ECO:0000250" key="3">
    <source>
        <dbReference type="UniProtKB" id="Q9JIH7"/>
    </source>
</evidence>
<evidence type="ECO:0000255" key="4"/>
<evidence type="ECO:0000255" key="5">
    <source>
        <dbReference type="PROSITE-ProRule" id="PRU00159"/>
    </source>
</evidence>
<evidence type="ECO:0000256" key="6">
    <source>
        <dbReference type="SAM" id="MobiDB-lite"/>
    </source>
</evidence>
<comment type="function">
    <text evidence="1">May regulate flowering time by modulating the photoperiod pathway.</text>
</comment>
<comment type="catalytic activity">
    <reaction>
        <text>L-seryl-[protein] + ATP = O-phospho-L-seryl-[protein] + ADP + H(+)</text>
        <dbReference type="Rhea" id="RHEA:17989"/>
        <dbReference type="Rhea" id="RHEA-COMP:9863"/>
        <dbReference type="Rhea" id="RHEA-COMP:11604"/>
        <dbReference type="ChEBI" id="CHEBI:15378"/>
        <dbReference type="ChEBI" id="CHEBI:29999"/>
        <dbReference type="ChEBI" id="CHEBI:30616"/>
        <dbReference type="ChEBI" id="CHEBI:83421"/>
        <dbReference type="ChEBI" id="CHEBI:456216"/>
        <dbReference type="EC" id="2.7.11.1"/>
    </reaction>
</comment>
<comment type="catalytic activity">
    <reaction>
        <text>L-threonyl-[protein] + ATP = O-phospho-L-threonyl-[protein] + ADP + H(+)</text>
        <dbReference type="Rhea" id="RHEA:46608"/>
        <dbReference type="Rhea" id="RHEA-COMP:11060"/>
        <dbReference type="Rhea" id="RHEA-COMP:11605"/>
        <dbReference type="ChEBI" id="CHEBI:15378"/>
        <dbReference type="ChEBI" id="CHEBI:30013"/>
        <dbReference type="ChEBI" id="CHEBI:30616"/>
        <dbReference type="ChEBI" id="CHEBI:61977"/>
        <dbReference type="ChEBI" id="CHEBI:456216"/>
        <dbReference type="EC" id="2.7.11.1"/>
    </reaction>
</comment>
<comment type="similarity">
    <text evidence="5">Belongs to the protein kinase superfamily. Ser/Thr protein kinase family. WNK subfamily.</text>
</comment>
<comment type="caution">
    <text evidence="2">Was named WNK/'with no lysine(K)' because key residues for catalysis, including the lysine involved in ATP binding, are either not conserved or differ compared to the residues described in other kinase family proteins.</text>
</comment>
<proteinExistence type="evidence at transcript level"/>